<protein>
    <recommendedName>
        <fullName>Serpentine receptor class delta-46</fullName>
        <shortName>Protein srd-46</shortName>
    </recommendedName>
</protein>
<accession>Q19508</accession>
<comment type="subcellular location">
    <subcellularLocation>
        <location evidence="2">Membrane</location>
        <topology evidence="2">Multi-pass membrane protein</topology>
    </subcellularLocation>
</comment>
<comment type="similarity">
    <text evidence="2">Belongs to the nematode receptor-like protein srd family.</text>
</comment>
<organism>
    <name type="scientific">Caenorhabditis elegans</name>
    <dbReference type="NCBI Taxonomy" id="6239"/>
    <lineage>
        <taxon>Eukaryota</taxon>
        <taxon>Metazoa</taxon>
        <taxon>Ecdysozoa</taxon>
        <taxon>Nematoda</taxon>
        <taxon>Chromadorea</taxon>
        <taxon>Rhabditida</taxon>
        <taxon>Rhabditina</taxon>
        <taxon>Rhabditomorpha</taxon>
        <taxon>Rhabditoidea</taxon>
        <taxon>Rhabditidae</taxon>
        <taxon>Peloderinae</taxon>
        <taxon>Caenorhabditis</taxon>
    </lineage>
</organism>
<dbReference type="EMBL" id="Z68114">
    <property type="protein sequence ID" value="CAA92161.1"/>
    <property type="molecule type" value="Genomic_DNA"/>
</dbReference>
<dbReference type="PIR" id="T21045">
    <property type="entry name" value="T21045"/>
</dbReference>
<dbReference type="RefSeq" id="NP_510065.1">
    <property type="nucleotide sequence ID" value="NM_077664.1"/>
</dbReference>
<dbReference type="SMR" id="Q19508"/>
<dbReference type="FunCoup" id="Q19508">
    <property type="interactions" value="9"/>
</dbReference>
<dbReference type="PaxDb" id="6239-F17A2.10"/>
<dbReference type="EnsemblMetazoa" id="F17A2.10.1">
    <property type="protein sequence ID" value="F17A2.10.1"/>
    <property type="gene ID" value="WBGene00005124"/>
</dbReference>
<dbReference type="GeneID" id="184606"/>
<dbReference type="KEGG" id="cel:CELE_F17A2.10"/>
<dbReference type="UCSC" id="F17A2.10">
    <property type="organism name" value="c. elegans"/>
</dbReference>
<dbReference type="AGR" id="WB:WBGene00005124"/>
<dbReference type="CTD" id="184606"/>
<dbReference type="WormBase" id="F17A2.10">
    <property type="protein sequence ID" value="CE15863"/>
    <property type="gene ID" value="WBGene00005124"/>
    <property type="gene designation" value="srd-46"/>
</dbReference>
<dbReference type="eggNOG" id="ENOG502TDGT">
    <property type="taxonomic scope" value="Eukaryota"/>
</dbReference>
<dbReference type="GeneTree" id="ENSGT00970000195825"/>
<dbReference type="HOGENOM" id="CLU_057924_2_0_1"/>
<dbReference type="InParanoid" id="Q19508"/>
<dbReference type="OrthoDB" id="5863340at2759"/>
<dbReference type="PhylomeDB" id="Q19508"/>
<dbReference type="PRO" id="PR:Q19508"/>
<dbReference type="Proteomes" id="UP000001940">
    <property type="component" value="Chromosome X"/>
</dbReference>
<dbReference type="GO" id="GO:0016020">
    <property type="term" value="C:membrane"/>
    <property type="evidence" value="ECO:0007669"/>
    <property type="project" value="UniProtKB-SubCell"/>
</dbReference>
<dbReference type="Gene3D" id="1.20.1070.10">
    <property type="entry name" value="Rhodopsin 7-helix transmembrane proteins"/>
    <property type="match status" value="1"/>
</dbReference>
<dbReference type="InterPro" id="IPR019421">
    <property type="entry name" value="7TM_GPCR_serpentine_rcpt_Srd"/>
</dbReference>
<dbReference type="InterPro" id="IPR050920">
    <property type="entry name" value="Nematode_rcpt-like_delta"/>
</dbReference>
<dbReference type="PANTHER" id="PTHR22945:SF26">
    <property type="entry name" value="SERPENTINE RECEPTOR CLASS DELTA-45-RELATED"/>
    <property type="match status" value="1"/>
</dbReference>
<dbReference type="PANTHER" id="PTHR22945">
    <property type="entry name" value="SERPENTINE RECEPTOR, CLASS D DELTA"/>
    <property type="match status" value="1"/>
</dbReference>
<dbReference type="Pfam" id="PF10317">
    <property type="entry name" value="7TM_GPCR_Srd"/>
    <property type="match status" value="1"/>
</dbReference>
<dbReference type="SUPFAM" id="SSF81321">
    <property type="entry name" value="Family A G protein-coupled receptor-like"/>
    <property type="match status" value="1"/>
</dbReference>
<gene>
    <name type="primary">srd-46</name>
    <name type="ORF">F17A2.10</name>
</gene>
<feature type="chain" id="PRO_0000104526" description="Serpentine receptor class delta-46">
    <location>
        <begin position="1"/>
        <end position="317"/>
    </location>
</feature>
<feature type="transmembrane region" description="Helical" evidence="1">
    <location>
        <begin position="9"/>
        <end position="29"/>
    </location>
</feature>
<feature type="transmembrane region" description="Helical" evidence="1">
    <location>
        <begin position="42"/>
        <end position="62"/>
    </location>
</feature>
<feature type="transmembrane region" description="Helical" evidence="1">
    <location>
        <begin position="91"/>
        <end position="111"/>
    </location>
</feature>
<feature type="transmembrane region" description="Helical" evidence="1">
    <location>
        <begin position="129"/>
        <end position="149"/>
    </location>
</feature>
<feature type="transmembrane region" description="Helical" evidence="1">
    <location>
        <begin position="185"/>
        <end position="205"/>
    </location>
</feature>
<feature type="transmembrane region" description="Helical" evidence="1">
    <location>
        <begin position="239"/>
        <end position="259"/>
    </location>
</feature>
<feature type="transmembrane region" description="Helical" evidence="1">
    <location>
        <begin position="269"/>
        <end position="289"/>
    </location>
</feature>
<sequence length="317" mass="36742">MLHIFLSYFYIIFFLIVFPTQLLLLYVIIFHSPKHLKTLKRIFLCNCSCQIFSMITLVLLQARQVSNLNPVELWCYGPLRYLDAIVAYTMYVLCEGTVLMSSILIFITMYVKYEAVRSIHRERSAKFSVIILSLSPLFITMSAEAYLTIEYHLPIEYQEKFSAINSNLGDHTVIGYIALDNIPAQIVFCTICGFFVIFPLIMFCLRRNIILFINSKLDLSSTTMRQQNRALINGLTLQAFLPLFCVCPIFICSFVALITKTEILLEQYFVSVVLLLPTFFEPYITFYTVSHYRKQVRIWLGKENMGSMMLVVSVSRL</sequence>
<name>SRD46_CAEEL</name>
<keyword id="KW-0472">Membrane</keyword>
<keyword id="KW-1185">Reference proteome</keyword>
<keyword id="KW-0812">Transmembrane</keyword>
<keyword id="KW-1133">Transmembrane helix</keyword>
<proteinExistence type="inferred from homology"/>
<evidence type="ECO:0000255" key="1"/>
<evidence type="ECO:0000305" key="2"/>
<reference key="1">
    <citation type="journal article" date="1998" name="Science">
        <title>Genome sequence of the nematode C. elegans: a platform for investigating biology.</title>
        <authorList>
            <consortium name="The C. elegans sequencing consortium"/>
        </authorList>
    </citation>
    <scope>NUCLEOTIDE SEQUENCE [LARGE SCALE GENOMIC DNA]</scope>
    <source>
        <strain>Bristol N2</strain>
    </source>
</reference>